<name>ENCAP_KUEST</name>
<protein>
    <recommendedName>
        <fullName>Diheme-cytochrome-encapsulin shell fusion protein</fullName>
    </recommendedName>
    <alternativeName>
        <fullName>Type 1 encapsulin shell protein</fullName>
    </alternativeName>
</protein>
<feature type="signal peptide" evidence="2">
    <location>
        <begin position="1"/>
        <end position="36"/>
    </location>
</feature>
<feature type="chain" id="PRO_5004195658" description="Diheme-cytochrome-encapsulin shell fusion protein" evidence="2">
    <location>
        <begin position="37"/>
        <end position="363"/>
    </location>
</feature>
<feature type="region of interest" description="Diheme c-type cytochrome" evidence="5">
    <location>
        <begin position="37"/>
        <end position="74"/>
    </location>
</feature>
<feature type="region of interest" description="Linker" evidence="5">
    <location>
        <begin position="75"/>
        <end position="94"/>
    </location>
</feature>
<feature type="region of interest" description="Encapsulin domain" evidence="5">
    <location>
        <begin position="95"/>
        <end position="363"/>
    </location>
</feature>
<feature type="binding site" description="covalent" evidence="5">
    <location>
        <position position="44"/>
    </location>
    <ligand>
        <name>heme</name>
        <dbReference type="ChEBI" id="CHEBI:30413"/>
        <label>1</label>
    </ligand>
</feature>
<feature type="binding site" description="covalent" evidence="5">
    <location>
        <position position="47"/>
    </location>
    <ligand>
        <name>heme</name>
        <dbReference type="ChEBI" id="CHEBI:30413"/>
        <label>1</label>
    </ligand>
</feature>
<feature type="binding site" description="axial binding residue" evidence="5">
    <location>
        <position position="48"/>
    </location>
    <ligand>
        <name>heme</name>
        <dbReference type="ChEBI" id="CHEBI:30413"/>
        <label>1</label>
    </ligand>
    <ligandPart>
        <name>Fe</name>
        <dbReference type="ChEBI" id="CHEBI:18248"/>
    </ligandPart>
</feature>
<feature type="binding site" description="covalent" evidence="5">
    <location>
        <position position="67"/>
    </location>
    <ligand>
        <name>heme</name>
        <dbReference type="ChEBI" id="CHEBI:30413"/>
        <label>2</label>
    </ligand>
</feature>
<feature type="binding site" description="covalent" evidence="5">
    <location>
        <position position="70"/>
    </location>
    <ligand>
        <name>heme</name>
        <dbReference type="ChEBI" id="CHEBI:30413"/>
        <label>2</label>
    </ligand>
</feature>
<feature type="binding site" description="axial binding residue" evidence="5">
    <location>
        <position position="71"/>
    </location>
    <ligand>
        <name>heme</name>
        <dbReference type="ChEBI" id="CHEBI:30413"/>
        <label>2</label>
    </ligand>
    <ligandPart>
        <name>Fe</name>
        <dbReference type="ChEBI" id="CHEBI:18248"/>
    </ligandPart>
</feature>
<keyword id="KW-1284">Encapsulin nanocompartment</keyword>
<keyword id="KW-0349">Heme</keyword>
<keyword id="KW-0408">Iron</keyword>
<keyword id="KW-0479">Metal-binding</keyword>
<keyword id="KW-0732">Signal</keyword>
<accession>Q1Q6L7</accession>
<reference key="1">
    <citation type="journal article" date="2006" name="Nature">
        <title>Deciphering the evolution and metabolism of an anammox bacterium from a community genome.</title>
        <authorList>
            <person name="Strous M."/>
            <person name="Pelletier E."/>
            <person name="Mangenot S."/>
            <person name="Rattei T."/>
            <person name="Lehner A."/>
            <person name="Taylor M.W."/>
            <person name="Horn M."/>
            <person name="Daims H."/>
            <person name="Bartol-Mavel D."/>
            <person name="Wincker P."/>
            <person name="Barbe V."/>
            <person name="Fonknechten N."/>
            <person name="Vallenet D."/>
            <person name="Segurens B."/>
            <person name="Schenowitz-Truong C."/>
            <person name="Medigue C."/>
            <person name="Collingro A."/>
            <person name="Snel B."/>
            <person name="Dutilh B.E."/>
            <person name="Op den Camp H.J."/>
            <person name="van der Drift C."/>
            <person name="Cirpus I."/>
            <person name="van de Pas-Schoonen K.T."/>
            <person name="Harhangi H.R."/>
            <person name="van Niftrik L."/>
            <person name="Schmid M."/>
            <person name="Keltjens J."/>
            <person name="van de Vossenberg J."/>
            <person name="Kartal B."/>
            <person name="Meier H."/>
            <person name="Frishman D."/>
            <person name="Huynen M.A."/>
            <person name="Mewes H."/>
            <person name="Weissenbach J."/>
            <person name="Jetten M.S.M."/>
            <person name="Wagner M."/>
            <person name="Le Paslier D."/>
        </authorList>
    </citation>
    <scope>NUCLEOTIDE SEQUENCE [LARGE SCALE GENOMIC DNA]</scope>
    <source>
        <strain>KUST_E</strain>
    </source>
</reference>
<reference key="2">
    <citation type="journal article" date="2017" name="Nat. Microbiol.">
        <title>Widespread distribution of encapsulin nanocompartments reveals functional diversity.</title>
        <authorList>
            <person name="Giessen T.W."/>
            <person name="Silver P.A."/>
        </authorList>
    </citation>
    <scope>FUNCTION</scope>
    <scope>PROBABLE COFACTOR</scope>
    <scope>SUBUNIT</scope>
    <scope>SUBCELLULAR LOCATION</scope>
</reference>
<reference key="3">
    <citation type="journal article" date="2021" name="Nat. Commun.">
        <title>Large-scale computational discovery and analysis of virus-derived microbial nanocompartments.</title>
        <authorList>
            <person name="Andreas M.P."/>
            <person name="Giessen T.W."/>
        </authorList>
    </citation>
    <scope>CLASSIFICATION</scope>
</reference>
<sequence length="363" mass="40021">MVMGILNTFKKVYAVTGFFALLAVFSLSQVGSSAFAACAKVDDCFSCHTTQELNAVHKNTPYQGQSCIVCHKAFAADDTCSDAKDGRFAKISSEININKEDWNKIQRAVHETTEKHLVGRKFLNIYGPLGTGAQSVPLDTYGLPSWASIDMLGEGNEAIHPLKREIAQIYLIYKDFWLFRRDIEFSKKCETPIDISAAIGAAVSVSRKEDDMVFNGLSEMGIPGLLTASGRNIMKLSDWSVIGNGFQDVVLAVEKLTSRGFNGPFALVVSPKLYAYLHRVYERTGQLEIQGVKELVNGGVYQSYVFNKDVALVIATGSLNMDLAVGSNYKVEYWGPQDLNHRFRVVGSSVLRIKCPQAICTLE</sequence>
<proteinExistence type="evidence at protein level"/>
<comment type="function">
    <text evidence="5">Fusion of the shell and cargo protein of a type 1 encapsulin nanocompartment. Protein missing its signal peptide makes 33 nm particles in E.coli (called cEnc), protein missing its signal peptide and diheme domain (residues 1-86, called Enc) makes 29 nm particles. The cEnc nancompartment encloses c-type heme. The cargo protein NIR-HAO (AC P0DV45) is probably targeted to the nanocompartment by its association with the diheme domain in cEnc; removal of the diheme domain in Enc halves the amount of cargo.</text>
</comment>
<comment type="cofactor">
    <cofactor evidence="3">
        <name>heme</name>
        <dbReference type="ChEBI" id="CHEBI:30413"/>
    </cofactor>
    <text evidence="5">Binds 2 heme groups per molecule.</text>
</comment>
<comment type="subunit">
    <text evidence="1 5">The encapsulin nanocompartment is probably formed by 180 monomers, with the N-terminus (diheme domain) inside (Probable). There are 36 pores where the pentamers meet as well as 3-fold axis channels and dimer channels (By similarity).</text>
</comment>
<comment type="subcellular location">
    <subcellularLocation>
        <location evidence="3">Encapsulin nanocompartment</location>
    </subcellularLocation>
    <text evidence="4">This type 1 encapsulin nanocompartment may be targeted to the anammoxosome.</text>
</comment>
<comment type="miscellaneous">
    <text evidence="3">In (PubMed:28263314) the signal peptide was removed prior to generating the constructs for expression in E.coli.</text>
</comment>
<comment type="similarity">
    <text evidence="4">Belongs to the encapsulin family. Family 1 subfamily.</text>
</comment>
<organism>
    <name type="scientific">Kuenenia stuttgartiensis</name>
    <dbReference type="NCBI Taxonomy" id="174633"/>
    <lineage>
        <taxon>Bacteria</taxon>
        <taxon>Pseudomonadati</taxon>
        <taxon>Planctomycetota</taxon>
        <taxon>Candidatus Brocadiia</taxon>
        <taxon>Candidatus Brocadiales</taxon>
        <taxon>Candidatus Brocadiaceae</taxon>
        <taxon>Candidatus Kuenenia</taxon>
    </lineage>
</organism>
<evidence type="ECO:0000250" key="1">
    <source>
        <dbReference type="UniProtKB" id="Q1D6H4"/>
    </source>
</evidence>
<evidence type="ECO:0000255" key="2"/>
<evidence type="ECO:0000269" key="3">
    <source>
    </source>
</evidence>
<evidence type="ECO:0000305" key="4"/>
<evidence type="ECO:0000305" key="5">
    <source>
    </source>
</evidence>
<gene>
    <name evidence="4" type="primary">enc</name>
    <name type="ORF">kuste2478</name>
</gene>
<dbReference type="EMBL" id="CT573071">
    <property type="protein sequence ID" value="CAJ73225.1"/>
    <property type="molecule type" value="Genomic_DNA"/>
</dbReference>
<dbReference type="SMR" id="Q1Q6L7"/>
<dbReference type="GO" id="GO:0140737">
    <property type="term" value="C:encapsulin nanocompartment"/>
    <property type="evidence" value="ECO:0000314"/>
    <property type="project" value="UniProtKB"/>
</dbReference>
<dbReference type="GO" id="GO:0020037">
    <property type="term" value="F:heme binding"/>
    <property type="evidence" value="ECO:0000314"/>
    <property type="project" value="UniProtKB"/>
</dbReference>
<dbReference type="GO" id="GO:0046872">
    <property type="term" value="F:metal ion binding"/>
    <property type="evidence" value="ECO:0007669"/>
    <property type="project" value="UniProtKB-KW"/>
</dbReference>
<dbReference type="Gene3D" id="3.30.2400.30">
    <property type="match status" value="1"/>
</dbReference>
<dbReference type="Gene3D" id="3.30.2320.10">
    <property type="entry name" value="hypothetical protein PF0899 domain"/>
    <property type="match status" value="1"/>
</dbReference>
<dbReference type="InterPro" id="IPR007544">
    <property type="entry name" value="ENCAP"/>
</dbReference>
<dbReference type="InterPro" id="IPR051429">
    <property type="entry name" value="Encapsulin_nc"/>
</dbReference>
<dbReference type="InterPro" id="IPR036280">
    <property type="entry name" value="Multihaem_cyt_sf"/>
</dbReference>
<dbReference type="NCBIfam" id="NF041155">
    <property type="entry name" value="encap_f1"/>
    <property type="match status" value="1"/>
</dbReference>
<dbReference type="PANTHER" id="PTHR37165">
    <property type="entry name" value="PEPTIDASE U56 FAMILY"/>
    <property type="match status" value="1"/>
</dbReference>
<dbReference type="PANTHER" id="PTHR37165:SF1">
    <property type="entry name" value="TYPE 1 ENCAPSULIN SHELL PROTEIN"/>
    <property type="match status" value="1"/>
</dbReference>
<dbReference type="Pfam" id="PF04454">
    <property type="entry name" value="Linocin_M18"/>
    <property type="match status" value="1"/>
</dbReference>
<dbReference type="SUPFAM" id="SSF48695">
    <property type="entry name" value="Multiheme cytochromes"/>
    <property type="match status" value="1"/>
</dbReference>
<dbReference type="PROSITE" id="PS51008">
    <property type="entry name" value="MULTIHEME_CYTC"/>
    <property type="match status" value="1"/>
</dbReference>